<keyword id="KW-0560">Oxidoreductase</keyword>
<accession>A4T413</accession>
<proteinExistence type="inferred from homology"/>
<organism>
    <name type="scientific">Mycolicibacterium gilvum (strain PYR-GCK)</name>
    <name type="common">Mycobacterium gilvum (strain PYR-GCK)</name>
    <dbReference type="NCBI Taxonomy" id="350054"/>
    <lineage>
        <taxon>Bacteria</taxon>
        <taxon>Bacillati</taxon>
        <taxon>Actinomycetota</taxon>
        <taxon>Actinomycetes</taxon>
        <taxon>Mycobacteriales</taxon>
        <taxon>Mycobacteriaceae</taxon>
        <taxon>Mycolicibacterium</taxon>
    </lineage>
</organism>
<evidence type="ECO:0000255" key="1">
    <source>
        <dbReference type="HAMAP-Rule" id="MF_01401"/>
    </source>
</evidence>
<comment type="function">
    <text evidence="1">Has an important function as a repair enzyme for proteins that have been inactivated by oxidation. Catalyzes the reversible oxidation-reduction of methionine sulfoxide in proteins to methionine.</text>
</comment>
<comment type="catalytic activity">
    <reaction evidence="1">
        <text>L-methionyl-[protein] + [thioredoxin]-disulfide + H2O = L-methionyl-(S)-S-oxide-[protein] + [thioredoxin]-dithiol</text>
        <dbReference type="Rhea" id="RHEA:14217"/>
        <dbReference type="Rhea" id="RHEA-COMP:10698"/>
        <dbReference type="Rhea" id="RHEA-COMP:10700"/>
        <dbReference type="Rhea" id="RHEA-COMP:12313"/>
        <dbReference type="Rhea" id="RHEA-COMP:12315"/>
        <dbReference type="ChEBI" id="CHEBI:15377"/>
        <dbReference type="ChEBI" id="CHEBI:16044"/>
        <dbReference type="ChEBI" id="CHEBI:29950"/>
        <dbReference type="ChEBI" id="CHEBI:44120"/>
        <dbReference type="ChEBI" id="CHEBI:50058"/>
        <dbReference type="EC" id="1.8.4.11"/>
    </reaction>
</comment>
<comment type="catalytic activity">
    <reaction evidence="1">
        <text>[thioredoxin]-disulfide + L-methionine + H2O = L-methionine (S)-S-oxide + [thioredoxin]-dithiol</text>
        <dbReference type="Rhea" id="RHEA:19993"/>
        <dbReference type="Rhea" id="RHEA-COMP:10698"/>
        <dbReference type="Rhea" id="RHEA-COMP:10700"/>
        <dbReference type="ChEBI" id="CHEBI:15377"/>
        <dbReference type="ChEBI" id="CHEBI:29950"/>
        <dbReference type="ChEBI" id="CHEBI:50058"/>
        <dbReference type="ChEBI" id="CHEBI:57844"/>
        <dbReference type="ChEBI" id="CHEBI:58772"/>
        <dbReference type="EC" id="1.8.4.11"/>
    </reaction>
</comment>
<comment type="similarity">
    <text evidence="1">Belongs to the MsrA Met sulfoxide reductase family.</text>
</comment>
<gene>
    <name evidence="1" type="primary">msrA</name>
    <name type="ordered locus">Mflv_1105</name>
</gene>
<name>MSRA_MYCGI</name>
<feature type="chain" id="PRO_1000145417" description="Peptide methionine sulfoxide reductase MsrA">
    <location>
        <begin position="1"/>
        <end position="169"/>
    </location>
</feature>
<feature type="active site" evidence="1">
    <location>
        <position position="13"/>
    </location>
</feature>
<reference key="1">
    <citation type="submission" date="2007-04" db="EMBL/GenBank/DDBJ databases">
        <title>Complete sequence of chromosome of Mycobacterium gilvum PYR-GCK.</title>
        <authorList>
            <consortium name="US DOE Joint Genome Institute"/>
            <person name="Copeland A."/>
            <person name="Lucas S."/>
            <person name="Lapidus A."/>
            <person name="Barry K."/>
            <person name="Detter J.C."/>
            <person name="Glavina del Rio T."/>
            <person name="Hammon N."/>
            <person name="Israni S."/>
            <person name="Dalin E."/>
            <person name="Tice H."/>
            <person name="Pitluck S."/>
            <person name="Chain P."/>
            <person name="Malfatti S."/>
            <person name="Shin M."/>
            <person name="Vergez L."/>
            <person name="Schmutz J."/>
            <person name="Larimer F."/>
            <person name="Land M."/>
            <person name="Hauser L."/>
            <person name="Kyrpides N."/>
            <person name="Mikhailova N."/>
            <person name="Miller C."/>
            <person name="Richardson P."/>
        </authorList>
    </citation>
    <scope>NUCLEOTIDE SEQUENCE [LARGE SCALE GENOMIC DNA]</scope>
    <source>
        <strain>PYR-GCK</strain>
    </source>
</reference>
<sequence>MSDHKRAVLAGGCFWGMQDLIRKQPGVVSTRVGYTGGQNDHPTYRNHPGHAEAIEIVYDPAQTDYRALLEFFFQIHDPTTKNRQGNDIGTSYRSEIFYVDEEQRQIALDTIADVDASGLWPGKVVTEVSPAPDFWEAEPEHQDYLERYPTGYTCHFPRPGWKLPKRAEV</sequence>
<dbReference type="EC" id="1.8.4.11" evidence="1"/>
<dbReference type="EMBL" id="CP000656">
    <property type="protein sequence ID" value="ABP43587.1"/>
    <property type="molecule type" value="Genomic_DNA"/>
</dbReference>
<dbReference type="SMR" id="A4T413"/>
<dbReference type="STRING" id="350054.Mflv_1105"/>
<dbReference type="KEGG" id="mgi:Mflv_1105"/>
<dbReference type="eggNOG" id="COG0225">
    <property type="taxonomic scope" value="Bacteria"/>
</dbReference>
<dbReference type="HOGENOM" id="CLU_031040_10_2_11"/>
<dbReference type="OrthoDB" id="4174719at2"/>
<dbReference type="GO" id="GO:0033744">
    <property type="term" value="F:L-methionine:thioredoxin-disulfide S-oxidoreductase activity"/>
    <property type="evidence" value="ECO:0007669"/>
    <property type="project" value="RHEA"/>
</dbReference>
<dbReference type="GO" id="GO:0008113">
    <property type="term" value="F:peptide-methionine (S)-S-oxide reductase activity"/>
    <property type="evidence" value="ECO:0007669"/>
    <property type="project" value="UniProtKB-UniRule"/>
</dbReference>
<dbReference type="GO" id="GO:0036211">
    <property type="term" value="P:protein modification process"/>
    <property type="evidence" value="ECO:0007669"/>
    <property type="project" value="UniProtKB-UniRule"/>
</dbReference>
<dbReference type="FunFam" id="3.30.1060.10:FF:000005">
    <property type="entry name" value="Peptide methionine sulfoxide reductase MsrA"/>
    <property type="match status" value="1"/>
</dbReference>
<dbReference type="Gene3D" id="3.30.1060.10">
    <property type="entry name" value="Peptide methionine sulphoxide reductase MsrA"/>
    <property type="match status" value="1"/>
</dbReference>
<dbReference type="HAMAP" id="MF_01401">
    <property type="entry name" value="MsrA"/>
    <property type="match status" value="1"/>
</dbReference>
<dbReference type="InterPro" id="IPR002569">
    <property type="entry name" value="Met_Sox_Rdtase_MsrA_dom"/>
</dbReference>
<dbReference type="InterPro" id="IPR036509">
    <property type="entry name" value="Met_Sox_Rdtase_MsrA_sf"/>
</dbReference>
<dbReference type="NCBIfam" id="TIGR00401">
    <property type="entry name" value="msrA"/>
    <property type="match status" value="1"/>
</dbReference>
<dbReference type="PANTHER" id="PTHR43774">
    <property type="entry name" value="PEPTIDE METHIONINE SULFOXIDE REDUCTASE"/>
    <property type="match status" value="1"/>
</dbReference>
<dbReference type="PANTHER" id="PTHR43774:SF1">
    <property type="entry name" value="PEPTIDE METHIONINE SULFOXIDE REDUCTASE MSRA 2"/>
    <property type="match status" value="1"/>
</dbReference>
<dbReference type="Pfam" id="PF01625">
    <property type="entry name" value="PMSR"/>
    <property type="match status" value="1"/>
</dbReference>
<dbReference type="SUPFAM" id="SSF55068">
    <property type="entry name" value="Peptide methionine sulfoxide reductase"/>
    <property type="match status" value="1"/>
</dbReference>
<protein>
    <recommendedName>
        <fullName evidence="1">Peptide methionine sulfoxide reductase MsrA</fullName>
        <shortName evidence="1">Protein-methionine-S-oxide reductase</shortName>
        <ecNumber evidence="1">1.8.4.11</ecNumber>
    </recommendedName>
    <alternativeName>
        <fullName evidence="1">Peptide-methionine (S)-S-oxide reductase</fullName>
        <shortName evidence="1">Peptide Met(O) reductase</shortName>
    </alternativeName>
</protein>